<reference key="1">
    <citation type="journal article" date="2003" name="Science">
        <title>A genomic view of the human-Bacteroides thetaiotaomicron symbiosis.</title>
        <authorList>
            <person name="Xu J."/>
            <person name="Bjursell M.K."/>
            <person name="Himrod J."/>
            <person name="Deng S."/>
            <person name="Carmichael L.K."/>
            <person name="Chiang H.C."/>
            <person name="Hooper L.V."/>
            <person name="Gordon J.I."/>
        </authorList>
    </citation>
    <scope>NUCLEOTIDE SEQUENCE [LARGE SCALE GENOMIC DNA]</scope>
    <source>
        <strain>ATCC 29148 / DSM 2079 / JCM 5827 / CCUG 10774 / NCTC 10582 / VPI-5482 / E50</strain>
    </source>
</reference>
<dbReference type="EC" id="1.3.1.14"/>
<dbReference type="EMBL" id="AE015928">
    <property type="protein sequence ID" value="AAO75999.1"/>
    <property type="molecule type" value="Genomic_DNA"/>
</dbReference>
<dbReference type="RefSeq" id="NP_809805.1">
    <property type="nucleotide sequence ID" value="NC_004663.1"/>
</dbReference>
<dbReference type="RefSeq" id="WP_008765720.1">
    <property type="nucleotide sequence ID" value="NC_004663.1"/>
</dbReference>
<dbReference type="SMR" id="Q8A9C3"/>
<dbReference type="FunCoup" id="Q8A9C3">
    <property type="interactions" value="231"/>
</dbReference>
<dbReference type="STRING" id="226186.BT_0892"/>
<dbReference type="PaxDb" id="226186-BT_0892"/>
<dbReference type="EnsemblBacteria" id="AAO75999">
    <property type="protein sequence ID" value="AAO75999"/>
    <property type="gene ID" value="BT_0892"/>
</dbReference>
<dbReference type="GeneID" id="60926862"/>
<dbReference type="KEGG" id="bth:BT_0892"/>
<dbReference type="PATRIC" id="fig|226186.12.peg.904"/>
<dbReference type="eggNOG" id="COG0167">
    <property type="taxonomic scope" value="Bacteria"/>
</dbReference>
<dbReference type="HOGENOM" id="CLU_042042_0_0_10"/>
<dbReference type="InParanoid" id="Q8A9C3"/>
<dbReference type="OrthoDB" id="9794954at2"/>
<dbReference type="UniPathway" id="UPA00070">
    <property type="reaction ID" value="UER00945"/>
</dbReference>
<dbReference type="Proteomes" id="UP000001414">
    <property type="component" value="Chromosome"/>
</dbReference>
<dbReference type="GO" id="GO:0005737">
    <property type="term" value="C:cytoplasm"/>
    <property type="evidence" value="ECO:0000318"/>
    <property type="project" value="GO_Central"/>
</dbReference>
<dbReference type="GO" id="GO:0004589">
    <property type="term" value="F:dihydroorotate dehydrogenase (NAD+) activity"/>
    <property type="evidence" value="ECO:0007669"/>
    <property type="project" value="UniProtKB-EC"/>
</dbReference>
<dbReference type="GO" id="GO:0004152">
    <property type="term" value="F:dihydroorotate dehydrogenase activity"/>
    <property type="evidence" value="ECO:0000318"/>
    <property type="project" value="GO_Central"/>
</dbReference>
<dbReference type="GO" id="GO:0006207">
    <property type="term" value="P:'de novo' pyrimidine nucleobase biosynthetic process"/>
    <property type="evidence" value="ECO:0000318"/>
    <property type="project" value="GO_Central"/>
</dbReference>
<dbReference type="GO" id="GO:0044205">
    <property type="term" value="P:'de novo' UMP biosynthetic process"/>
    <property type="evidence" value="ECO:0007669"/>
    <property type="project" value="UniProtKB-UniRule"/>
</dbReference>
<dbReference type="CDD" id="cd04740">
    <property type="entry name" value="DHOD_1B_like"/>
    <property type="match status" value="1"/>
</dbReference>
<dbReference type="FunFam" id="3.20.20.70:FF:000069">
    <property type="entry name" value="Dihydroorotate dehydrogenase"/>
    <property type="match status" value="1"/>
</dbReference>
<dbReference type="Gene3D" id="3.20.20.70">
    <property type="entry name" value="Aldolase class I"/>
    <property type="match status" value="1"/>
</dbReference>
<dbReference type="HAMAP" id="MF_00224">
    <property type="entry name" value="DHO_dh_type1"/>
    <property type="match status" value="1"/>
</dbReference>
<dbReference type="InterPro" id="IPR013785">
    <property type="entry name" value="Aldolase_TIM"/>
</dbReference>
<dbReference type="InterPro" id="IPR050074">
    <property type="entry name" value="DHO_dehydrogenase"/>
</dbReference>
<dbReference type="InterPro" id="IPR033888">
    <property type="entry name" value="DHOD_1B"/>
</dbReference>
<dbReference type="InterPro" id="IPR024920">
    <property type="entry name" value="Dihydroorotate_DH_1"/>
</dbReference>
<dbReference type="InterPro" id="IPR012135">
    <property type="entry name" value="Dihydroorotate_DH_1_2"/>
</dbReference>
<dbReference type="InterPro" id="IPR005720">
    <property type="entry name" value="Dihydroorotate_DH_cat"/>
</dbReference>
<dbReference type="InterPro" id="IPR001295">
    <property type="entry name" value="Dihydroorotate_DH_CS"/>
</dbReference>
<dbReference type="InterPro" id="IPR049622">
    <property type="entry name" value="Dihydroorotate_DH_I"/>
</dbReference>
<dbReference type="NCBIfam" id="NF005574">
    <property type="entry name" value="PRK07259.1"/>
    <property type="match status" value="1"/>
</dbReference>
<dbReference type="NCBIfam" id="TIGR01037">
    <property type="entry name" value="pyrD_sub1_fam"/>
    <property type="match status" value="1"/>
</dbReference>
<dbReference type="PANTHER" id="PTHR48109:SF1">
    <property type="entry name" value="DIHYDROOROTATE DEHYDROGENASE (FUMARATE)"/>
    <property type="match status" value="1"/>
</dbReference>
<dbReference type="PANTHER" id="PTHR48109">
    <property type="entry name" value="DIHYDROOROTATE DEHYDROGENASE (QUINONE), MITOCHONDRIAL-RELATED"/>
    <property type="match status" value="1"/>
</dbReference>
<dbReference type="Pfam" id="PF01180">
    <property type="entry name" value="DHO_dh"/>
    <property type="match status" value="1"/>
</dbReference>
<dbReference type="PIRSF" id="PIRSF000164">
    <property type="entry name" value="DHO_oxidase"/>
    <property type="match status" value="1"/>
</dbReference>
<dbReference type="SUPFAM" id="SSF51395">
    <property type="entry name" value="FMN-linked oxidoreductases"/>
    <property type="match status" value="1"/>
</dbReference>
<dbReference type="PROSITE" id="PS00911">
    <property type="entry name" value="DHODEHASE_1"/>
    <property type="match status" value="1"/>
</dbReference>
<dbReference type="PROSITE" id="PS00912">
    <property type="entry name" value="DHODEHASE_2"/>
    <property type="match status" value="1"/>
</dbReference>
<sequence length="303" mass="32296">MADLSVNIGELQMKNPVMTASGTFGYGEEFSDFIDIARIGGIIVKGTTLHKREGNPYPRMAETPSGMLNAVGLQNKGVDYFVEQIYPRIKDIQTNMIVNVSGSAIEDYVKTAEIINELDKIPAIELNISCPNVKQGGMAFGVSAKGASEVVKAVRAAYKKTLIVKLSPNVTDITEIARAAEESGADSVSLINTLLGMAIDAERKRPILSTVTGGMSGAAVKPIALRMVWQVAKAVNIPVIGLGGIMNWKDAVEFMLAGASAIQIGTANFIDPAVTIKVEDGINNYLERHGCKSVKEIIGALEV</sequence>
<accession>Q8A9C3</accession>
<gene>
    <name type="primary">pyrD</name>
    <name type="ordered locus">BT_0892</name>
</gene>
<evidence type="ECO:0000250" key="1"/>
<evidence type="ECO:0000305" key="2"/>
<proteinExistence type="inferred from homology"/>
<protein>
    <recommendedName>
        <fullName>Dihydroorotate dehydrogenase B (NAD(+)), catalytic subunit</fullName>
        <shortName>DHOD B</shortName>
        <shortName>DHODase B</shortName>
        <shortName>DHOdehase B</shortName>
        <ecNumber>1.3.1.14</ecNumber>
    </recommendedName>
    <alternativeName>
        <fullName>Dihydroorotate oxidase B</fullName>
    </alternativeName>
    <alternativeName>
        <fullName>Orotate reductase (NADH)</fullName>
    </alternativeName>
</protein>
<comment type="function">
    <text evidence="1">Catalyzes the conversion of dihydroorotate to orotate with NAD(+) as electron acceptor.</text>
</comment>
<comment type="catalytic activity">
    <reaction>
        <text>(S)-dihydroorotate + NAD(+) = orotate + NADH + H(+)</text>
        <dbReference type="Rhea" id="RHEA:13513"/>
        <dbReference type="ChEBI" id="CHEBI:15378"/>
        <dbReference type="ChEBI" id="CHEBI:30839"/>
        <dbReference type="ChEBI" id="CHEBI:30864"/>
        <dbReference type="ChEBI" id="CHEBI:57540"/>
        <dbReference type="ChEBI" id="CHEBI:57945"/>
        <dbReference type="EC" id="1.3.1.14"/>
    </reaction>
</comment>
<comment type="cofactor">
    <cofactor evidence="1">
        <name>FMN</name>
        <dbReference type="ChEBI" id="CHEBI:58210"/>
    </cofactor>
    <text evidence="1">Binds 1 FMN per subunit.</text>
</comment>
<comment type="pathway">
    <text>Pyrimidine metabolism; UMP biosynthesis via de novo pathway; orotate from (S)-dihydroorotate (NAD(+) route): step 1/1.</text>
</comment>
<comment type="subunit">
    <text evidence="1">Heterotetramer of 2 PyrK and 2 PyrD type B subunits.</text>
</comment>
<comment type="subcellular location">
    <subcellularLocation>
        <location evidence="1">Cytoplasm</location>
    </subcellularLocation>
</comment>
<comment type="similarity">
    <text evidence="2">Belongs to the dihydroorotate dehydrogenase family. Type 1 subfamily.</text>
</comment>
<keyword id="KW-0963">Cytoplasm</keyword>
<keyword id="KW-0285">Flavoprotein</keyword>
<keyword id="KW-0288">FMN</keyword>
<keyword id="KW-0520">NAD</keyword>
<keyword id="KW-0560">Oxidoreductase</keyword>
<keyword id="KW-0665">Pyrimidine biosynthesis</keyword>
<keyword id="KW-1185">Reference proteome</keyword>
<feature type="chain" id="PRO_1000024131" description="Dihydroorotate dehydrogenase B (NAD(+)), catalytic subunit">
    <location>
        <begin position="1"/>
        <end position="303"/>
    </location>
</feature>
<feature type="active site" description="Nucleophile">
    <location>
        <position position="130"/>
    </location>
</feature>
<feature type="binding site" evidence="1">
    <location>
        <position position="21"/>
    </location>
    <ligand>
        <name>FMN</name>
        <dbReference type="ChEBI" id="CHEBI:58210"/>
    </ligand>
</feature>
<feature type="binding site" evidence="1">
    <location>
        <begin position="45"/>
        <end position="46"/>
    </location>
    <ligand>
        <name>FMN</name>
        <dbReference type="ChEBI" id="CHEBI:58210"/>
    </ligand>
</feature>
<feature type="binding site" evidence="1">
    <location>
        <position position="45"/>
    </location>
    <ligand>
        <name>substrate</name>
    </ligand>
</feature>
<feature type="binding site" evidence="1">
    <location>
        <begin position="69"/>
        <end position="73"/>
    </location>
    <ligand>
        <name>substrate</name>
    </ligand>
</feature>
<feature type="binding site" evidence="1">
    <location>
        <position position="99"/>
    </location>
    <ligand>
        <name>FMN</name>
        <dbReference type="ChEBI" id="CHEBI:58210"/>
    </ligand>
</feature>
<feature type="binding site" evidence="1">
    <location>
        <position position="127"/>
    </location>
    <ligand>
        <name>FMN</name>
        <dbReference type="ChEBI" id="CHEBI:58210"/>
    </ligand>
</feature>
<feature type="binding site" evidence="1">
    <location>
        <position position="127"/>
    </location>
    <ligand>
        <name>substrate</name>
    </ligand>
</feature>
<feature type="binding site" evidence="1">
    <location>
        <position position="165"/>
    </location>
    <ligand>
        <name>FMN</name>
        <dbReference type="ChEBI" id="CHEBI:58210"/>
    </ligand>
</feature>
<feature type="binding site" evidence="1">
    <location>
        <position position="191"/>
    </location>
    <ligand>
        <name>FMN</name>
        <dbReference type="ChEBI" id="CHEBI:58210"/>
    </ligand>
</feature>
<feature type="binding site" evidence="1">
    <location>
        <begin position="192"/>
        <end position="193"/>
    </location>
    <ligand>
        <name>substrate</name>
    </ligand>
</feature>
<feature type="binding site" evidence="1">
    <location>
        <position position="217"/>
    </location>
    <ligand>
        <name>FMN</name>
        <dbReference type="ChEBI" id="CHEBI:58210"/>
    </ligand>
</feature>
<feature type="binding site" evidence="1">
    <location>
        <begin position="243"/>
        <end position="244"/>
    </location>
    <ligand>
        <name>FMN</name>
        <dbReference type="ChEBI" id="CHEBI:58210"/>
    </ligand>
</feature>
<feature type="binding site" evidence="1">
    <location>
        <begin position="265"/>
        <end position="266"/>
    </location>
    <ligand>
        <name>FMN</name>
        <dbReference type="ChEBI" id="CHEBI:58210"/>
    </ligand>
</feature>
<name>PYRDB_BACTN</name>
<organism>
    <name type="scientific">Bacteroides thetaiotaomicron (strain ATCC 29148 / DSM 2079 / JCM 5827 / CCUG 10774 / NCTC 10582 / VPI-5482 / E50)</name>
    <dbReference type="NCBI Taxonomy" id="226186"/>
    <lineage>
        <taxon>Bacteria</taxon>
        <taxon>Pseudomonadati</taxon>
        <taxon>Bacteroidota</taxon>
        <taxon>Bacteroidia</taxon>
        <taxon>Bacteroidales</taxon>
        <taxon>Bacteroidaceae</taxon>
        <taxon>Bacteroides</taxon>
    </lineage>
</organism>